<evidence type="ECO:0000250" key="1"/>
<evidence type="ECO:0000269" key="2">
    <source>
    </source>
</evidence>
<evidence type="ECO:0000269" key="3">
    <source>
    </source>
</evidence>
<evidence type="ECO:0000305" key="4"/>
<evidence type="ECO:0007829" key="5">
    <source>
        <dbReference type="PDB" id="2MP1"/>
    </source>
</evidence>
<evidence type="ECO:0007829" key="6">
    <source>
        <dbReference type="PDB" id="7STA"/>
    </source>
</evidence>
<reference key="1">
    <citation type="journal article" date="1997" name="J. Immunol.">
        <title>Identification through bioinformatics of two new macrophage proinflammatory human chemokines: MIP-3alpha and MIP-3beta.</title>
        <authorList>
            <person name="Rossi D.L."/>
            <person name="Vicari A.P."/>
            <person name="Franz-Bacon K."/>
            <person name="McClanahan T.K."/>
            <person name="Zlotnik A."/>
        </authorList>
    </citation>
    <scope>NUCLEOTIDE SEQUENCE [MRNA]</scope>
</reference>
<reference key="2">
    <citation type="journal article" date="1997" name="J. Biol. Chem.">
        <title>Molecular cloning of a novel human CC chemokine EBI1-ligand chemokine that is a specific functional ligand for EBI1, CCR7.</title>
        <authorList>
            <person name="Yoshida R."/>
            <person name="Imai T."/>
            <person name="Hieshima K."/>
            <person name="Kusuda J."/>
            <person name="Baba M."/>
            <person name="Kitaura M."/>
            <person name="Nishimura M."/>
            <person name="Kakizaki M."/>
            <person name="Nomiyama H."/>
            <person name="Yoshie O."/>
        </authorList>
    </citation>
    <scope>NUCLEOTIDE SEQUENCE [MRNA]</scope>
    <scope>PARTIAL PROTEIN SEQUENCE</scope>
    <source>
        <tissue>Fetal lung</tissue>
    </source>
</reference>
<reference key="3">
    <citation type="submission" date="1998-06" db="EMBL/GenBank/DDBJ databases">
        <title>DCCL chemokines represent a novel beta chemokine subfamily.</title>
        <authorList>
            <person name="Hromas R.A."/>
            <person name="Gray P."/>
            <person name="Klemsz M."/>
            <person name="Fife K."/>
            <person name="Broxmeyer H."/>
        </authorList>
    </citation>
    <scope>NUCLEOTIDE SEQUENCE [MRNA]</scope>
</reference>
<reference key="4">
    <citation type="submission" date="1998-01" db="EMBL/GenBank/DDBJ databases">
        <authorList>
            <person name="Reiterer P."/>
            <person name="Bernhardt G."/>
            <person name="Lipp M."/>
        </authorList>
    </citation>
    <scope>NUCLEOTIDE SEQUENCE [GENOMIC DNA]</scope>
</reference>
<reference key="5">
    <citation type="journal article" date="2004" name="Genome Res.">
        <title>The status, quality, and expansion of the NIH full-length cDNA project: the Mammalian Gene Collection (MGC).</title>
        <authorList>
            <consortium name="The MGC Project Team"/>
        </authorList>
    </citation>
    <scope>NUCLEOTIDE SEQUENCE [LARGE SCALE MRNA]</scope>
    <source>
        <tissue>Pancreas</tissue>
        <tissue>Spleen</tissue>
    </source>
</reference>
<reference key="6">
    <citation type="journal article" date="1998" name="J. Immunol.">
        <title>CK beta-11/macrophage inflammatory protein-3 beta/EBI1-ligand chemokine is an efficacious chemoattractant for T and B cells.</title>
        <authorList>
            <person name="Kim C.H."/>
            <person name="Pelus L.M."/>
            <person name="White J.R."/>
            <person name="Applebaum E."/>
            <person name="Johanson K."/>
            <person name="Broxmeyer H.E."/>
        </authorList>
    </citation>
    <scope>FUNCTION</scope>
</reference>
<reference key="7">
    <citation type="journal article" date="2013" name="J. Biol. Chem.">
        <title>Beta-arrestin recruitment and G protein signaling by the atypical human chemokine decoy receptor CCX-CKR.</title>
        <authorList>
            <person name="Watts A.O."/>
            <person name="Verkaar F."/>
            <person name="van der Lee M.M."/>
            <person name="Timmerman C.A."/>
            <person name="Kuijer M."/>
            <person name="van Offenbeek J."/>
            <person name="van Lith L.H."/>
            <person name="Smit M.J."/>
            <person name="Leurs R."/>
            <person name="Zaman G.J."/>
            <person name="Vischer H.F."/>
        </authorList>
    </citation>
    <scope>RECEPTOR INTERACTION</scope>
</reference>
<reference key="8">
    <citation type="journal article" date="2016" name="J. Biol. Chem.">
        <title>The Anti-inflammatory Protein TSG-6 Regulates Chemokine Function by Inhibiting Chemokine/Glycosaminoglycan Interactions.</title>
        <authorList>
            <person name="Dyer D.P."/>
            <person name="Salanga C.L."/>
            <person name="Johns S.C."/>
            <person name="Valdambrini E."/>
            <person name="Fuster M.M."/>
            <person name="Milner C.M."/>
            <person name="Day A.J."/>
            <person name="Handel T.M."/>
        </authorList>
    </citation>
    <scope>INTERACTION WITH TNFAIP6</scope>
</reference>
<feature type="signal peptide">
    <location>
        <begin position="1"/>
        <end position="21"/>
    </location>
</feature>
<feature type="chain" id="PRO_0000005214" description="C-C motif chemokine 19">
    <location>
        <begin position="22"/>
        <end position="98"/>
    </location>
</feature>
<feature type="disulfide bond" evidence="1">
    <location>
        <begin position="29"/>
        <end position="55"/>
    </location>
</feature>
<feature type="disulfide bond" evidence="1">
    <location>
        <begin position="30"/>
        <end position="71"/>
    </location>
</feature>
<feature type="strand" evidence="5">
    <location>
        <begin position="26"/>
        <end position="29"/>
    </location>
</feature>
<feature type="helix" evidence="6">
    <location>
        <begin position="40"/>
        <end position="42"/>
    </location>
</feature>
<feature type="strand" evidence="6">
    <location>
        <begin position="43"/>
        <end position="49"/>
    </location>
</feature>
<feature type="helix" evidence="6">
    <location>
        <begin position="51"/>
        <end position="53"/>
    </location>
</feature>
<feature type="strand" evidence="6">
    <location>
        <begin position="59"/>
        <end position="64"/>
    </location>
</feature>
<feature type="strand" evidence="6">
    <location>
        <begin position="69"/>
        <end position="72"/>
    </location>
</feature>
<feature type="strand" evidence="5">
    <location>
        <begin position="74"/>
        <end position="76"/>
    </location>
</feature>
<feature type="helix" evidence="6">
    <location>
        <begin position="77"/>
        <end position="88"/>
    </location>
</feature>
<organism>
    <name type="scientific">Homo sapiens</name>
    <name type="common">Human</name>
    <dbReference type="NCBI Taxonomy" id="9606"/>
    <lineage>
        <taxon>Eukaryota</taxon>
        <taxon>Metazoa</taxon>
        <taxon>Chordata</taxon>
        <taxon>Craniata</taxon>
        <taxon>Vertebrata</taxon>
        <taxon>Euteleostomi</taxon>
        <taxon>Mammalia</taxon>
        <taxon>Eutheria</taxon>
        <taxon>Euarchontoglires</taxon>
        <taxon>Primates</taxon>
        <taxon>Haplorrhini</taxon>
        <taxon>Catarrhini</taxon>
        <taxon>Hominidae</taxon>
        <taxon>Homo</taxon>
    </lineage>
</organism>
<sequence length="98" mass="10993">MALLLALSLLVLWTSPAPTLSGTNDAEDCCLSVTQKPIPGYIVRNFHYLLIKDGCRVPAVVFTTLRGRQLCAPPDQPWVERIIQRLQRTSAKMKRRSS</sequence>
<name>CCL19_HUMAN</name>
<accession>Q99731</accession>
<accession>O00697</accession>
<accession>O00736</accession>
<gene>
    <name type="primary">CCL19</name>
    <name type="synonym">ELC</name>
    <name type="synonym">MIP3B</name>
    <name type="synonym">SCYA19</name>
</gene>
<dbReference type="EMBL" id="U77180">
    <property type="protein sequence ID" value="AAC50944.1"/>
    <property type="molecule type" value="mRNA"/>
</dbReference>
<dbReference type="EMBL" id="AB000887">
    <property type="protein sequence ID" value="BAA20383.1"/>
    <property type="molecule type" value="mRNA"/>
</dbReference>
<dbReference type="EMBL" id="U88321">
    <property type="protein sequence ID" value="AAC23905.1"/>
    <property type="molecule type" value="mRNA"/>
</dbReference>
<dbReference type="EMBL" id="AJ223410">
    <property type="protein sequence ID" value="CAA11307.1"/>
    <property type="molecule type" value="Genomic_DNA"/>
</dbReference>
<dbReference type="EMBL" id="BC027968">
    <property type="protein sequence ID" value="AAH27968.1"/>
    <property type="molecule type" value="mRNA"/>
</dbReference>
<dbReference type="CCDS" id="CCDS6570.1"/>
<dbReference type="RefSeq" id="NP_006265.1">
    <property type="nucleotide sequence ID" value="NM_006274.3"/>
</dbReference>
<dbReference type="PDB" id="2MP1">
    <property type="method" value="NMR"/>
    <property type="chains" value="A=22-98"/>
</dbReference>
<dbReference type="PDB" id="7STA">
    <property type="method" value="X-ray"/>
    <property type="resolution" value="2.50 A"/>
    <property type="chains" value="A/B/C/D=28-91"/>
</dbReference>
<dbReference type="PDBsum" id="2MP1"/>
<dbReference type="PDBsum" id="7STA"/>
<dbReference type="BMRB" id="Q99731"/>
<dbReference type="SMR" id="Q99731"/>
<dbReference type="BioGRID" id="112266">
    <property type="interactions" value="23"/>
</dbReference>
<dbReference type="DIP" id="DIP-5857N"/>
<dbReference type="FunCoup" id="Q99731">
    <property type="interactions" value="787"/>
</dbReference>
<dbReference type="IntAct" id="Q99731">
    <property type="interactions" value="13"/>
</dbReference>
<dbReference type="STRING" id="9606.ENSP00000308815"/>
<dbReference type="PhosphoSitePlus" id="Q99731"/>
<dbReference type="BioMuta" id="CCL19"/>
<dbReference type="DMDM" id="2842763"/>
<dbReference type="jPOST" id="Q99731"/>
<dbReference type="MassIVE" id="Q99731"/>
<dbReference type="PaxDb" id="9606-ENSP00000308815"/>
<dbReference type="PeptideAtlas" id="Q99731"/>
<dbReference type="ProteomicsDB" id="78447"/>
<dbReference type="Antibodypedia" id="11384">
    <property type="antibodies" value="514 antibodies from 33 providers"/>
</dbReference>
<dbReference type="DNASU" id="6363"/>
<dbReference type="Ensembl" id="ENST00000311925.7">
    <property type="protein sequence ID" value="ENSP00000308815.2"/>
    <property type="gene ID" value="ENSG00000172724.12"/>
</dbReference>
<dbReference type="GeneID" id="6363"/>
<dbReference type="KEGG" id="hsa:6363"/>
<dbReference type="MANE-Select" id="ENST00000311925.7">
    <property type="protein sequence ID" value="ENSP00000308815.2"/>
    <property type="RefSeq nucleotide sequence ID" value="NM_006274.3"/>
    <property type="RefSeq protein sequence ID" value="NP_006265.1"/>
</dbReference>
<dbReference type="UCSC" id="uc003zvn.4">
    <property type="organism name" value="human"/>
</dbReference>
<dbReference type="AGR" id="HGNC:10617"/>
<dbReference type="CTD" id="6363"/>
<dbReference type="DisGeNET" id="6363"/>
<dbReference type="GeneCards" id="CCL19"/>
<dbReference type="HGNC" id="HGNC:10617">
    <property type="gene designation" value="CCL19"/>
</dbReference>
<dbReference type="HPA" id="ENSG00000172724">
    <property type="expression patterns" value="Tissue enriched (lymphoid)"/>
</dbReference>
<dbReference type="MIM" id="602227">
    <property type="type" value="gene"/>
</dbReference>
<dbReference type="neXtProt" id="NX_Q99731"/>
<dbReference type="OpenTargets" id="ENSG00000172724"/>
<dbReference type="PharmGKB" id="PA35550"/>
<dbReference type="VEuPathDB" id="HostDB:ENSG00000172724"/>
<dbReference type="eggNOG" id="ENOG502SENW">
    <property type="taxonomic scope" value="Eukaryota"/>
</dbReference>
<dbReference type="GeneTree" id="ENSGT01130000278316"/>
<dbReference type="HOGENOM" id="CLU_141716_3_1_1"/>
<dbReference type="InParanoid" id="Q99731"/>
<dbReference type="OMA" id="GHELCAP"/>
<dbReference type="OrthoDB" id="9909116at2759"/>
<dbReference type="PAN-GO" id="Q99731">
    <property type="GO annotations" value="14 GO annotations based on evolutionary models"/>
</dbReference>
<dbReference type="PhylomeDB" id="Q99731"/>
<dbReference type="TreeFam" id="TF334888"/>
<dbReference type="PathwayCommons" id="Q99731"/>
<dbReference type="Reactome" id="R-HSA-380108">
    <property type="pathway name" value="Chemokine receptors bind chemokines"/>
</dbReference>
<dbReference type="Reactome" id="R-HSA-418594">
    <property type="pathway name" value="G alpha (i) signalling events"/>
</dbReference>
<dbReference type="Reactome" id="R-HSA-6783783">
    <property type="pathway name" value="Interleukin-10 signaling"/>
</dbReference>
<dbReference type="SignaLink" id="Q99731"/>
<dbReference type="SIGNOR" id="Q99731"/>
<dbReference type="BioGRID-ORCS" id="6363">
    <property type="hits" value="7 hits in 1143 CRISPR screens"/>
</dbReference>
<dbReference type="EvolutionaryTrace" id="Q99731"/>
<dbReference type="GeneWiki" id="CCL19"/>
<dbReference type="GenomeRNAi" id="6363"/>
<dbReference type="Pharos" id="Q99731">
    <property type="development level" value="Tbio"/>
</dbReference>
<dbReference type="PRO" id="PR:Q99731"/>
<dbReference type="Proteomes" id="UP000005640">
    <property type="component" value="Chromosome 9"/>
</dbReference>
<dbReference type="RNAct" id="Q99731">
    <property type="molecule type" value="protein"/>
</dbReference>
<dbReference type="Bgee" id="ENSG00000172724">
    <property type="expression patterns" value="Expressed in vermiform appendix and 138 other cell types or tissues"/>
</dbReference>
<dbReference type="ExpressionAtlas" id="Q99731">
    <property type="expression patterns" value="baseline and differential"/>
</dbReference>
<dbReference type="GO" id="GO:0005576">
    <property type="term" value="C:extracellular region"/>
    <property type="evidence" value="ECO:0000304"/>
    <property type="project" value="Reactome"/>
</dbReference>
<dbReference type="GO" id="GO:0005615">
    <property type="term" value="C:extracellular space"/>
    <property type="evidence" value="ECO:0000318"/>
    <property type="project" value="GO_Central"/>
</dbReference>
<dbReference type="GO" id="GO:0048020">
    <property type="term" value="F:CCR chemokine receptor binding"/>
    <property type="evidence" value="ECO:0000353"/>
    <property type="project" value="UniProtKB"/>
</dbReference>
<dbReference type="GO" id="GO:0031735">
    <property type="term" value="F:CCR10 chemokine receptor binding"/>
    <property type="evidence" value="ECO:0000314"/>
    <property type="project" value="BHF-UCL"/>
</dbReference>
<dbReference type="GO" id="GO:0031732">
    <property type="term" value="F:CCR7 chemokine receptor binding"/>
    <property type="evidence" value="ECO:0000250"/>
    <property type="project" value="BHF-UCL"/>
</dbReference>
<dbReference type="GO" id="GO:0008009">
    <property type="term" value="F:chemokine activity"/>
    <property type="evidence" value="ECO:0000314"/>
    <property type="project" value="BHF-UCL"/>
</dbReference>
<dbReference type="GO" id="GO:0042379">
    <property type="term" value="F:chemokine receptor binding"/>
    <property type="evidence" value="ECO:0000314"/>
    <property type="project" value="UniProtKB"/>
</dbReference>
<dbReference type="GO" id="GO:0061844">
    <property type="term" value="P:antimicrobial humoral immune response mediated by antimicrobial peptide"/>
    <property type="evidence" value="ECO:0000318"/>
    <property type="project" value="GO_Central"/>
</dbReference>
<dbReference type="GO" id="GO:0038119">
    <property type="term" value="P:CCL19-activated CCR7 signaling pathway"/>
    <property type="evidence" value="ECO:0000314"/>
    <property type="project" value="BHF-UCL"/>
</dbReference>
<dbReference type="GO" id="GO:0007154">
    <property type="term" value="P:cell communication"/>
    <property type="evidence" value="ECO:0000304"/>
    <property type="project" value="ProtInc"/>
</dbReference>
<dbReference type="GO" id="GO:0048469">
    <property type="term" value="P:cell maturation"/>
    <property type="evidence" value="ECO:0000250"/>
    <property type="project" value="BHF-UCL"/>
</dbReference>
<dbReference type="GO" id="GO:0071380">
    <property type="term" value="P:cellular response to prostaglandin E stimulus"/>
    <property type="evidence" value="ECO:0000314"/>
    <property type="project" value="BHF-UCL"/>
</dbReference>
<dbReference type="GO" id="GO:0098586">
    <property type="term" value="P:cellular response to virus"/>
    <property type="evidence" value="ECO:0000315"/>
    <property type="project" value="UniProtKB"/>
</dbReference>
<dbReference type="GO" id="GO:0070098">
    <property type="term" value="P:chemokine-mediated signaling pathway"/>
    <property type="evidence" value="ECO:0000318"/>
    <property type="project" value="GO_Central"/>
</dbReference>
<dbReference type="GO" id="GO:0002407">
    <property type="term" value="P:dendritic cell chemotaxis"/>
    <property type="evidence" value="ECO:0000314"/>
    <property type="project" value="BHF-UCL"/>
</dbReference>
<dbReference type="GO" id="GO:0048245">
    <property type="term" value="P:eosinophil chemotaxis"/>
    <property type="evidence" value="ECO:0000318"/>
    <property type="project" value="GO_Central"/>
</dbReference>
<dbReference type="GO" id="GO:0001768">
    <property type="term" value="P:establishment of T cell polarity"/>
    <property type="evidence" value="ECO:0000314"/>
    <property type="project" value="BHF-UCL"/>
</dbReference>
<dbReference type="GO" id="GO:0006955">
    <property type="term" value="P:immune response"/>
    <property type="evidence" value="ECO:0000304"/>
    <property type="project" value="ProtInc"/>
</dbReference>
<dbReference type="GO" id="GO:0001771">
    <property type="term" value="P:immunological synapse formation"/>
    <property type="evidence" value="ECO:0000250"/>
    <property type="project" value="BHF-UCL"/>
</dbReference>
<dbReference type="GO" id="GO:0006954">
    <property type="term" value="P:inflammatory response"/>
    <property type="evidence" value="ECO:0000318"/>
    <property type="project" value="GO_Central"/>
</dbReference>
<dbReference type="GO" id="GO:0006874">
    <property type="term" value="P:intracellular calcium ion homeostasis"/>
    <property type="evidence" value="ECO:0000304"/>
    <property type="project" value="ProtInc"/>
</dbReference>
<dbReference type="GO" id="GO:0097029">
    <property type="term" value="P:mature conventional dendritic cell differentiation"/>
    <property type="evidence" value="ECO:0000250"/>
    <property type="project" value="BHF-UCL"/>
</dbReference>
<dbReference type="GO" id="GO:0002408">
    <property type="term" value="P:myeloid dendritic cell chemotaxis"/>
    <property type="evidence" value="ECO:0000314"/>
    <property type="project" value="BHF-UCL"/>
</dbReference>
<dbReference type="GO" id="GO:2000669">
    <property type="term" value="P:negative regulation of dendritic cell apoptotic process"/>
    <property type="evidence" value="ECO:0000314"/>
    <property type="project" value="BHF-UCL"/>
</dbReference>
<dbReference type="GO" id="GO:0043123">
    <property type="term" value="P:positive regulation of canonical NF-kappaB signal transduction"/>
    <property type="evidence" value="ECO:0000314"/>
    <property type="project" value="BHF-UCL"/>
</dbReference>
<dbReference type="GO" id="GO:0030335">
    <property type="term" value="P:positive regulation of cell migration"/>
    <property type="evidence" value="ECO:0000318"/>
    <property type="project" value="GO_Central"/>
</dbReference>
<dbReference type="GO" id="GO:2000147">
    <property type="term" value="P:positive regulation of cell motility"/>
    <property type="evidence" value="ECO:0000314"/>
    <property type="project" value="BHF-UCL"/>
</dbReference>
<dbReference type="GO" id="GO:0050921">
    <property type="term" value="P:positive regulation of chemotaxis"/>
    <property type="evidence" value="ECO:0000250"/>
    <property type="project" value="BHF-UCL"/>
</dbReference>
<dbReference type="GO" id="GO:0002606">
    <property type="term" value="P:positive regulation of dendritic cell antigen processing and presentation"/>
    <property type="evidence" value="ECO:0000250"/>
    <property type="project" value="BHF-UCL"/>
</dbReference>
<dbReference type="GO" id="GO:2000549">
    <property type="term" value="P:positive regulation of dendritic cell dendrite assembly"/>
    <property type="evidence" value="ECO:0000250"/>
    <property type="project" value="BHF-UCL"/>
</dbReference>
<dbReference type="GO" id="GO:0045807">
    <property type="term" value="P:positive regulation of endocytosis"/>
    <property type="evidence" value="ECO:0000250"/>
    <property type="project" value="BHF-UCL"/>
</dbReference>
<dbReference type="GO" id="GO:0070374">
    <property type="term" value="P:positive regulation of ERK1 and ERK2 cascade"/>
    <property type="evidence" value="ECO:0000314"/>
    <property type="project" value="BHF-UCL"/>
</dbReference>
<dbReference type="GO" id="GO:0010560">
    <property type="term" value="P:positive regulation of glycoprotein biosynthetic process"/>
    <property type="evidence" value="ECO:0000250"/>
    <property type="project" value="BHF-UCL"/>
</dbReference>
<dbReference type="GO" id="GO:0032731">
    <property type="term" value="P:positive regulation of interleukin-1 beta production"/>
    <property type="evidence" value="ECO:0000250"/>
    <property type="project" value="BHF-UCL"/>
</dbReference>
<dbReference type="GO" id="GO:0032735">
    <property type="term" value="P:positive regulation of interleukin-12 production"/>
    <property type="evidence" value="ECO:0000250"/>
    <property type="project" value="BHF-UCL"/>
</dbReference>
<dbReference type="GO" id="GO:0046330">
    <property type="term" value="P:positive regulation of JNK cascade"/>
    <property type="evidence" value="ECO:0000314"/>
    <property type="project" value="BHF-UCL"/>
</dbReference>
<dbReference type="GO" id="GO:0090023">
    <property type="term" value="P:positive regulation of neutrophil chemotaxis"/>
    <property type="evidence" value="ECO:0000314"/>
    <property type="project" value="BHF-UCL"/>
</dbReference>
<dbReference type="GO" id="GO:1901224">
    <property type="term" value="P:positive regulation of non-canonical NF-kappaB signal transduction"/>
    <property type="evidence" value="ECO:0000314"/>
    <property type="project" value="BHF-UCL"/>
</dbReference>
<dbReference type="GO" id="GO:0051897">
    <property type="term" value="P:positive regulation of phosphatidylinositol 3-kinase/protein kinase B signal transduction"/>
    <property type="evidence" value="ECO:0000314"/>
    <property type="project" value="BHF-UCL"/>
</dbReference>
<dbReference type="GO" id="GO:0141214">
    <property type="term" value="P:positive regulation of phospholipase C/protein kinase C signal transduction"/>
    <property type="evidence" value="ECO:0000314"/>
    <property type="project" value="BHF-UCL"/>
</dbReference>
<dbReference type="GO" id="GO:0035022">
    <property type="term" value="P:positive regulation of Rac protein signal transduction"/>
    <property type="evidence" value="ECO:0000250"/>
    <property type="project" value="BHF-UCL"/>
</dbReference>
<dbReference type="GO" id="GO:0048260">
    <property type="term" value="P:positive regulation of receptor-mediated endocytosis"/>
    <property type="evidence" value="ECO:0000250"/>
    <property type="project" value="BHF-UCL"/>
</dbReference>
<dbReference type="GO" id="GO:0042102">
    <property type="term" value="P:positive regulation of T cell proliferation"/>
    <property type="evidence" value="ECO:0000250"/>
    <property type="project" value="BHF-UCL"/>
</dbReference>
<dbReference type="GO" id="GO:0045627">
    <property type="term" value="P:positive regulation of T-helper 1 cell differentiation"/>
    <property type="evidence" value="ECO:0000250"/>
    <property type="project" value="BHF-UCL"/>
</dbReference>
<dbReference type="GO" id="GO:0032760">
    <property type="term" value="P:positive regulation of tumor necrosis factor production"/>
    <property type="evidence" value="ECO:0000250"/>
    <property type="project" value="BHF-UCL"/>
</dbReference>
<dbReference type="GO" id="GO:0032489">
    <property type="term" value="P:regulation of Cdc42 protein signal transduction"/>
    <property type="evidence" value="ECO:0000250"/>
    <property type="project" value="BHF-UCL"/>
</dbReference>
<dbReference type="GO" id="GO:0060491">
    <property type="term" value="P:regulation of cell projection assembly"/>
    <property type="evidence" value="ECO:0000250"/>
    <property type="project" value="BHF-UCL"/>
</dbReference>
<dbReference type="GO" id="GO:0051209">
    <property type="term" value="P:release of sequestered calcium ion into cytosol"/>
    <property type="evidence" value="ECO:0000314"/>
    <property type="project" value="BHF-UCL"/>
</dbReference>
<dbReference type="GO" id="GO:0071731">
    <property type="term" value="P:response to nitric oxide"/>
    <property type="evidence" value="ECO:0000314"/>
    <property type="project" value="BHF-UCL"/>
</dbReference>
<dbReference type="GO" id="GO:0009615">
    <property type="term" value="P:response to virus"/>
    <property type="evidence" value="ECO:0000304"/>
    <property type="project" value="ProtInc"/>
</dbReference>
<dbReference type="GO" id="GO:0031295">
    <property type="term" value="P:T cell costimulation"/>
    <property type="evidence" value="ECO:0000250"/>
    <property type="project" value="BHF-UCL"/>
</dbReference>
<dbReference type="CDD" id="cd01119">
    <property type="entry name" value="Chemokine_CC_DCCL"/>
    <property type="match status" value="1"/>
</dbReference>
<dbReference type="FunFam" id="2.40.50.40:FF:000012">
    <property type="entry name" value="C-C motif chemokine"/>
    <property type="match status" value="1"/>
</dbReference>
<dbReference type="Gene3D" id="2.40.50.40">
    <property type="match status" value="1"/>
</dbReference>
<dbReference type="InterPro" id="IPR039809">
    <property type="entry name" value="Chemokine_b/g/d"/>
</dbReference>
<dbReference type="InterPro" id="IPR000827">
    <property type="entry name" value="Chemokine_CC_CS"/>
</dbReference>
<dbReference type="InterPro" id="IPR034133">
    <property type="entry name" value="Chemokine_CC_DCCL"/>
</dbReference>
<dbReference type="InterPro" id="IPR001811">
    <property type="entry name" value="Chemokine_IL8-like_dom"/>
</dbReference>
<dbReference type="InterPro" id="IPR036048">
    <property type="entry name" value="Interleukin_8-like_sf"/>
</dbReference>
<dbReference type="PANTHER" id="PTHR12015:SF80">
    <property type="entry name" value="C-C MOTIF CHEMOKINE 19"/>
    <property type="match status" value="1"/>
</dbReference>
<dbReference type="PANTHER" id="PTHR12015">
    <property type="entry name" value="SMALL INDUCIBLE CYTOKINE A"/>
    <property type="match status" value="1"/>
</dbReference>
<dbReference type="Pfam" id="PF00048">
    <property type="entry name" value="IL8"/>
    <property type="match status" value="1"/>
</dbReference>
<dbReference type="SMART" id="SM00199">
    <property type="entry name" value="SCY"/>
    <property type="match status" value="1"/>
</dbReference>
<dbReference type="SUPFAM" id="SSF54117">
    <property type="entry name" value="Interleukin 8-like chemokines"/>
    <property type="match status" value="1"/>
</dbReference>
<dbReference type="PROSITE" id="PS00472">
    <property type="entry name" value="SMALL_CYTOKINES_CC"/>
    <property type="match status" value="1"/>
</dbReference>
<protein>
    <recommendedName>
        <fullName>C-C motif chemokine 19</fullName>
    </recommendedName>
    <alternativeName>
        <fullName>Beta-chemokine exodus-3</fullName>
    </alternativeName>
    <alternativeName>
        <fullName>CK beta-11</fullName>
    </alternativeName>
    <alternativeName>
        <fullName>Epstein-Barr virus-induced molecule 1 ligand chemokine</fullName>
        <shortName>EBI1 ligand chemokine</shortName>
        <shortName>ELC</shortName>
    </alternativeName>
    <alternativeName>
        <fullName>Macrophage inflammatory protein 3 beta</fullName>
        <shortName>MIP-3-beta</shortName>
    </alternativeName>
    <alternativeName>
        <fullName>Small-inducible cytokine A19</fullName>
    </alternativeName>
</protein>
<keyword id="KW-0002">3D-structure</keyword>
<keyword id="KW-0145">Chemotaxis</keyword>
<keyword id="KW-0202">Cytokine</keyword>
<keyword id="KW-0903">Direct protein sequencing</keyword>
<keyword id="KW-1015">Disulfide bond</keyword>
<keyword id="KW-0395">Inflammatory response</keyword>
<keyword id="KW-1267">Proteomics identification</keyword>
<keyword id="KW-1185">Reference proteome</keyword>
<keyword id="KW-0964">Secreted</keyword>
<keyword id="KW-0732">Signal</keyword>
<comment type="function">
    <text evidence="3">May play a role not only in inflammatory and immunological responses but also in normal lymphocyte recirculation and homing. May play an important role in trafficking of T-cells in thymus, and T-cell and B-cell migration to secondary lymphoid organs. Binds to chemokine receptor CCR7. Recombinant CCL19 shows potent chemotactic activity for T-cells and B-cells but not for granulocytes and monocytes. Binds to atypical chemokine receptor ACKR4 and mediates the recruitment of beta-arrestin (ARRB1/2) to ACKR4.</text>
</comment>
<comment type="subunit">
    <text evidence="2">Interacts with TNFAIP6 (via Link domain).</text>
</comment>
<comment type="interaction">
    <interactant intactId="EBI-11711434">
        <id>Q99731</id>
    </interactant>
    <interactant intactId="EBI-16439278">
        <id>Q6FHY5</id>
        <label>MEOX2</label>
    </interactant>
    <organismsDiffer>false</organismsDiffer>
    <experiments>3</experiments>
</comment>
<comment type="interaction">
    <interactant intactId="EBI-11711510">
        <id>PRO_0000005214</id>
    </interactant>
    <interactant intactId="EBI-11700693">
        <id>P98066</id>
        <label>TNFAIP6</label>
    </interactant>
    <organismsDiffer>false</organismsDiffer>
    <experiments>2</experiments>
</comment>
<comment type="subcellular location">
    <subcellularLocation>
        <location>Secreted</location>
    </subcellularLocation>
</comment>
<comment type="tissue specificity">
    <text>Expressed at high levels in the lymph nodes, thymus and appendix. Intermediate levels seen in colon and trachea, while low levels found in spleen, small intestine, lung, kidney and stomach.</text>
</comment>
<comment type="similarity">
    <text evidence="4">Belongs to the intercrine beta (chemokine CC) family.</text>
</comment>
<comment type="online information" name="Wikipedia">
    <link uri="https://en.wikipedia.org/wiki/CCL19"/>
    <text>CCL19 entry</text>
</comment>
<proteinExistence type="evidence at protein level"/>